<organism>
    <name type="scientific">Arabidopsis thaliana</name>
    <name type="common">Mouse-ear cress</name>
    <dbReference type="NCBI Taxonomy" id="3702"/>
    <lineage>
        <taxon>Eukaryota</taxon>
        <taxon>Viridiplantae</taxon>
        <taxon>Streptophyta</taxon>
        <taxon>Embryophyta</taxon>
        <taxon>Tracheophyta</taxon>
        <taxon>Spermatophyta</taxon>
        <taxon>Magnoliopsida</taxon>
        <taxon>eudicotyledons</taxon>
        <taxon>Gunneridae</taxon>
        <taxon>Pentapetalae</taxon>
        <taxon>rosids</taxon>
        <taxon>malvids</taxon>
        <taxon>Brassicales</taxon>
        <taxon>Brassicaceae</taxon>
        <taxon>Camelineae</taxon>
        <taxon>Arabidopsis</taxon>
    </lineage>
</organism>
<sequence>MALISTRRTLSTLLNKTLSSSTSYSSSFPTLSSRSRFAMPLIEKVSSSRTSLGPCYISTRPKTSGSGYSPLNDPSPNWSNRPPKETILLDGCDYEHWLIVMEFTDPKPTEEEMINSYVKTLTSVLGCEEEAKKKIYSVCTSTYTGFGALISEELSCKVKALPGVLWVLPDSYLDVPNKDYGGDLYVEGKVIPRPQYRFTEQRHTRPRPRPRYDRRRETMQVERREPSMGLHSPVNPGEFNKPSA</sequence>
<proteinExistence type="evidence at protein level"/>
<dbReference type="EMBL" id="AC023912">
    <property type="protein sequence ID" value="AAF63819.1"/>
    <property type="molecule type" value="Genomic_DNA"/>
</dbReference>
<dbReference type="EMBL" id="CP002686">
    <property type="protein sequence ID" value="AEE74459.1"/>
    <property type="molecule type" value="Genomic_DNA"/>
</dbReference>
<dbReference type="EMBL" id="CP002686">
    <property type="protein sequence ID" value="AEE74460.1"/>
    <property type="molecule type" value="Genomic_DNA"/>
</dbReference>
<dbReference type="EMBL" id="BT002982">
    <property type="protein sequence ID" value="AAO22791.1"/>
    <property type="molecule type" value="mRNA"/>
</dbReference>
<dbReference type="EMBL" id="BT004451">
    <property type="protein sequence ID" value="AAO42445.1"/>
    <property type="molecule type" value="mRNA"/>
</dbReference>
<dbReference type="RefSeq" id="NP_187335.1">
    <molecule id="Q84JZ6-2"/>
    <property type="nucleotide sequence ID" value="NM_111559.3"/>
</dbReference>
<dbReference type="RefSeq" id="NP_974243.1">
    <molecule id="Q84JZ6-1"/>
    <property type="nucleotide sequence ID" value="NM_202514.3"/>
</dbReference>
<dbReference type="SMR" id="Q84JZ6"/>
<dbReference type="FunCoup" id="Q84JZ6">
    <property type="interactions" value="693"/>
</dbReference>
<dbReference type="IntAct" id="Q84JZ6">
    <property type="interactions" value="6"/>
</dbReference>
<dbReference type="STRING" id="3702.Q84JZ6"/>
<dbReference type="iPTMnet" id="Q84JZ6"/>
<dbReference type="PaxDb" id="3702-AT3G06790.1"/>
<dbReference type="ProteomicsDB" id="238304">
    <molecule id="Q84JZ6-1"/>
</dbReference>
<dbReference type="EnsemblPlants" id="AT3G06790.1">
    <molecule id="Q84JZ6-2"/>
    <property type="protein sequence ID" value="AT3G06790.1"/>
    <property type="gene ID" value="AT3G06790"/>
</dbReference>
<dbReference type="EnsemblPlants" id="AT3G06790.2">
    <molecule id="Q84JZ6-1"/>
    <property type="protein sequence ID" value="AT3G06790.2"/>
    <property type="gene ID" value="AT3G06790"/>
</dbReference>
<dbReference type="GeneID" id="819864"/>
<dbReference type="Gramene" id="AT3G06790.1">
    <molecule id="Q84JZ6-2"/>
    <property type="protein sequence ID" value="AT3G06790.1"/>
    <property type="gene ID" value="AT3G06790"/>
</dbReference>
<dbReference type="Gramene" id="AT3G06790.2">
    <molecule id="Q84JZ6-1"/>
    <property type="protein sequence ID" value="AT3G06790.2"/>
    <property type="gene ID" value="AT3G06790"/>
</dbReference>
<dbReference type="KEGG" id="ath:AT3G06790"/>
<dbReference type="Araport" id="AT3G06790"/>
<dbReference type="TAIR" id="AT3G06790">
    <property type="gene designation" value="MORF3"/>
</dbReference>
<dbReference type="eggNOG" id="ENOG502QSEB">
    <property type="taxonomic scope" value="Eukaryota"/>
</dbReference>
<dbReference type="HOGENOM" id="CLU_073703_2_0_1"/>
<dbReference type="InParanoid" id="Q84JZ6"/>
<dbReference type="OMA" id="QQGRNDR"/>
<dbReference type="OrthoDB" id="1913091at2759"/>
<dbReference type="PhylomeDB" id="Q84JZ6"/>
<dbReference type="PRO" id="PR:Q84JZ6"/>
<dbReference type="Proteomes" id="UP000006548">
    <property type="component" value="Chromosome 3"/>
</dbReference>
<dbReference type="ExpressionAtlas" id="Q84JZ6">
    <property type="expression patterns" value="baseline and differential"/>
</dbReference>
<dbReference type="GO" id="GO:0005739">
    <property type="term" value="C:mitochondrion"/>
    <property type="evidence" value="ECO:0007005"/>
    <property type="project" value="TAIR"/>
</dbReference>
<dbReference type="GO" id="GO:0050897">
    <property type="term" value="F:cobalt ion binding"/>
    <property type="evidence" value="ECO:0007005"/>
    <property type="project" value="TAIR"/>
</dbReference>
<dbReference type="GO" id="GO:0046983">
    <property type="term" value="F:protein dimerization activity"/>
    <property type="evidence" value="ECO:0000353"/>
    <property type="project" value="TAIR"/>
</dbReference>
<dbReference type="GO" id="GO:0016554">
    <property type="term" value="P:cytidine to uridine editing"/>
    <property type="evidence" value="ECO:0007669"/>
    <property type="project" value="InterPro"/>
</dbReference>
<dbReference type="GO" id="GO:0080156">
    <property type="term" value="P:mitochondrial mRNA modification"/>
    <property type="evidence" value="ECO:0000315"/>
    <property type="project" value="UniProtKB"/>
</dbReference>
<dbReference type="GO" id="GO:1900864">
    <property type="term" value="P:mitochondrial RNA modification"/>
    <property type="evidence" value="ECO:0000315"/>
    <property type="project" value="TAIR"/>
</dbReference>
<dbReference type="GO" id="GO:0006397">
    <property type="term" value="P:mRNA processing"/>
    <property type="evidence" value="ECO:0007669"/>
    <property type="project" value="UniProtKB-KW"/>
</dbReference>
<dbReference type="Gene3D" id="3.30.70.80">
    <property type="entry name" value="Peptidase S8 propeptide/proteinase inhibitor I9"/>
    <property type="match status" value="1"/>
</dbReference>
<dbReference type="InterPro" id="IPR039206">
    <property type="entry name" value="MORF/ORRM1/DAG-like"/>
</dbReference>
<dbReference type="InterPro" id="IPR054059">
    <property type="entry name" value="MORF/ORRM1/DAG-like_MORF"/>
</dbReference>
<dbReference type="InterPro" id="IPR037045">
    <property type="entry name" value="S8pro/Inhibitor_I9_sf"/>
</dbReference>
<dbReference type="PANTHER" id="PTHR31346">
    <property type="entry name" value="MULTIPLE ORGANELLAR RNA EDITING FACTOR 2, CHLOROPLASTIC-RELATED-RELATED"/>
    <property type="match status" value="1"/>
</dbReference>
<dbReference type="PANTHER" id="PTHR31346:SF1">
    <property type="entry name" value="MULTIPLE ORGANELLAR RNA EDITING FACTOR 3, MITOCHONDRIAL"/>
    <property type="match status" value="1"/>
</dbReference>
<dbReference type="Pfam" id="PF21864">
    <property type="entry name" value="MORF_dom"/>
    <property type="match status" value="1"/>
</dbReference>
<evidence type="ECO:0000255" key="1"/>
<evidence type="ECO:0000256" key="2">
    <source>
        <dbReference type="SAM" id="MobiDB-lite"/>
    </source>
</evidence>
<evidence type="ECO:0000269" key="3">
    <source>
    </source>
</evidence>
<evidence type="ECO:0000269" key="4">
    <source>
    </source>
</evidence>
<evidence type="ECO:0000269" key="5">
    <source>
    </source>
</evidence>
<evidence type="ECO:0000303" key="6">
    <source>
    </source>
</evidence>
<evidence type="ECO:0000303" key="7">
    <source>
    </source>
</evidence>
<evidence type="ECO:0000305" key="8"/>
<evidence type="ECO:0000312" key="9">
    <source>
        <dbReference type="Araport" id="AT3G06790"/>
    </source>
</evidence>
<evidence type="ECO:0000312" key="10">
    <source>
        <dbReference type="EMBL" id="AAF63819.1"/>
    </source>
</evidence>
<accession>Q84JZ6</accession>
<accession>Q9M7Y5</accession>
<keyword id="KW-0025">Alternative splicing</keyword>
<keyword id="KW-0496">Mitochondrion</keyword>
<keyword id="KW-0507">mRNA processing</keyword>
<keyword id="KW-1185">Reference proteome</keyword>
<keyword id="KW-0809">Transit peptide</keyword>
<comment type="function">
    <text evidence="3 4">Involved in organellar RNA editing. Required for the processing of RNA editing sites in mitochondria.</text>
</comment>
<comment type="subunit">
    <text evidence="3 5">Heterodimer with MORF1 (PubMed:22411807, PubMed:25583991). Homodimer and heterodimers with MORF8/RIP1, MORF4/RIP4 and MORF5/RIP5 (PubMed:25583991).</text>
</comment>
<comment type="interaction">
    <interactant intactId="EBI-4465639">
        <id>Q84JZ6</id>
    </interactant>
    <interactant intactId="EBI-979237">
        <id>Q9ATB4</id>
        <label>ADA2B</label>
    </interactant>
    <organismsDiffer>false</organismsDiffer>
    <experiments>3</experiments>
</comment>
<comment type="interaction">
    <interactant intactId="EBI-4465639">
        <id>Q84JZ6</id>
    </interactant>
    <interactant intactId="EBI-15192813">
        <id>Q9FDW1</id>
        <label>MYB44</label>
    </interactant>
    <organismsDiffer>false</organismsDiffer>
    <experiments>3</experiments>
</comment>
<comment type="interaction">
    <interactant intactId="EBI-4465639">
        <id>Q84JZ6</id>
    </interactant>
    <interactant intactId="EBI-15681313">
        <id>Q9LF53</id>
        <label>RGL3</label>
    </interactant>
    <organismsDiffer>false</organismsDiffer>
    <experiments>3</experiments>
</comment>
<comment type="subcellular location">
    <subcellularLocation>
        <location evidence="5">Mitochondrion</location>
    </subcellularLocation>
</comment>
<comment type="alternative products">
    <event type="alternative splicing"/>
    <isoform>
        <id>Q84JZ6-1</id>
        <name>1</name>
        <sequence type="displayed"/>
    </isoform>
    <isoform>
        <id>Q84JZ6-2</id>
        <name>2</name>
        <sequence type="described" ref="VSP_057527"/>
    </isoform>
</comment>
<comment type="disruption phenotype">
    <text evidence="3 4">Retarded growth.</text>
</comment>
<comment type="similarity">
    <text>Belongs to the MORF family.</text>
</comment>
<name>MORF3_ARATH</name>
<gene>
    <name evidence="6" type="primary">MORF3</name>
    <name evidence="7" type="synonym">RIP3</name>
    <name evidence="9" type="ordered locus">At3g06790</name>
    <name evidence="10" type="ORF">F3E22.7</name>
</gene>
<protein>
    <recommendedName>
        <fullName evidence="8">Multiple organellar RNA editing factor 3, mitochondrial</fullName>
    </recommendedName>
    <alternativeName>
        <fullName evidence="7">RNA editing-interacting protein 3</fullName>
    </alternativeName>
</protein>
<reference key="1">
    <citation type="journal article" date="2000" name="Nature">
        <title>Sequence and analysis of chromosome 3 of the plant Arabidopsis thaliana.</title>
        <authorList>
            <person name="Salanoubat M."/>
            <person name="Lemcke K."/>
            <person name="Rieger M."/>
            <person name="Ansorge W."/>
            <person name="Unseld M."/>
            <person name="Fartmann B."/>
            <person name="Valle G."/>
            <person name="Bloecker H."/>
            <person name="Perez-Alonso M."/>
            <person name="Obermaier B."/>
            <person name="Delseny M."/>
            <person name="Boutry M."/>
            <person name="Grivell L.A."/>
            <person name="Mache R."/>
            <person name="Puigdomenech P."/>
            <person name="De Simone V."/>
            <person name="Choisne N."/>
            <person name="Artiguenave F."/>
            <person name="Robert C."/>
            <person name="Brottier P."/>
            <person name="Wincker P."/>
            <person name="Cattolico L."/>
            <person name="Weissenbach J."/>
            <person name="Saurin W."/>
            <person name="Quetier F."/>
            <person name="Schaefer M."/>
            <person name="Mueller-Auer S."/>
            <person name="Gabel C."/>
            <person name="Fuchs M."/>
            <person name="Benes V."/>
            <person name="Wurmbach E."/>
            <person name="Drzonek H."/>
            <person name="Erfle H."/>
            <person name="Jordan N."/>
            <person name="Bangert S."/>
            <person name="Wiedelmann R."/>
            <person name="Kranz H."/>
            <person name="Voss H."/>
            <person name="Holland R."/>
            <person name="Brandt P."/>
            <person name="Nyakatura G."/>
            <person name="Vezzi A."/>
            <person name="D'Angelo M."/>
            <person name="Pallavicini A."/>
            <person name="Toppo S."/>
            <person name="Simionati B."/>
            <person name="Conrad A."/>
            <person name="Hornischer K."/>
            <person name="Kauer G."/>
            <person name="Loehnert T.-H."/>
            <person name="Nordsiek G."/>
            <person name="Reichelt J."/>
            <person name="Scharfe M."/>
            <person name="Schoen O."/>
            <person name="Bargues M."/>
            <person name="Terol J."/>
            <person name="Climent J."/>
            <person name="Navarro P."/>
            <person name="Collado C."/>
            <person name="Perez-Perez A."/>
            <person name="Ottenwaelder B."/>
            <person name="Duchemin D."/>
            <person name="Cooke R."/>
            <person name="Laudie M."/>
            <person name="Berger-Llauro C."/>
            <person name="Purnelle B."/>
            <person name="Masuy D."/>
            <person name="de Haan M."/>
            <person name="Maarse A.C."/>
            <person name="Alcaraz J.-P."/>
            <person name="Cottet A."/>
            <person name="Casacuberta E."/>
            <person name="Monfort A."/>
            <person name="Argiriou A."/>
            <person name="Flores M."/>
            <person name="Liguori R."/>
            <person name="Vitale D."/>
            <person name="Mannhaupt G."/>
            <person name="Haase D."/>
            <person name="Schoof H."/>
            <person name="Rudd S."/>
            <person name="Zaccaria P."/>
            <person name="Mewes H.-W."/>
            <person name="Mayer K.F.X."/>
            <person name="Kaul S."/>
            <person name="Town C.D."/>
            <person name="Koo H.L."/>
            <person name="Tallon L.J."/>
            <person name="Jenkins J."/>
            <person name="Rooney T."/>
            <person name="Rizzo M."/>
            <person name="Walts A."/>
            <person name="Utterback T."/>
            <person name="Fujii C.Y."/>
            <person name="Shea T.P."/>
            <person name="Creasy T.H."/>
            <person name="Haas B."/>
            <person name="Maiti R."/>
            <person name="Wu D."/>
            <person name="Peterson J."/>
            <person name="Van Aken S."/>
            <person name="Pai G."/>
            <person name="Militscher J."/>
            <person name="Sellers P."/>
            <person name="Gill J.E."/>
            <person name="Feldblyum T.V."/>
            <person name="Preuss D."/>
            <person name="Lin X."/>
            <person name="Nierman W.C."/>
            <person name="Salzberg S.L."/>
            <person name="White O."/>
            <person name="Venter J.C."/>
            <person name="Fraser C.M."/>
            <person name="Kaneko T."/>
            <person name="Nakamura Y."/>
            <person name="Sato S."/>
            <person name="Kato T."/>
            <person name="Asamizu E."/>
            <person name="Sasamoto S."/>
            <person name="Kimura T."/>
            <person name="Idesawa K."/>
            <person name="Kawashima K."/>
            <person name="Kishida Y."/>
            <person name="Kiyokawa C."/>
            <person name="Kohara M."/>
            <person name="Matsumoto M."/>
            <person name="Matsuno A."/>
            <person name="Muraki A."/>
            <person name="Nakayama S."/>
            <person name="Nakazaki N."/>
            <person name="Shinpo S."/>
            <person name="Takeuchi C."/>
            <person name="Wada T."/>
            <person name="Watanabe A."/>
            <person name="Yamada M."/>
            <person name="Yasuda M."/>
            <person name="Tabata S."/>
        </authorList>
    </citation>
    <scope>NUCLEOTIDE SEQUENCE [LARGE SCALE GENOMIC DNA]</scope>
    <source>
        <strain>cv. Columbia</strain>
    </source>
</reference>
<reference key="2">
    <citation type="journal article" date="2017" name="Plant J.">
        <title>Araport11: a complete reannotation of the Arabidopsis thaliana reference genome.</title>
        <authorList>
            <person name="Cheng C.Y."/>
            <person name="Krishnakumar V."/>
            <person name="Chan A.P."/>
            <person name="Thibaud-Nissen F."/>
            <person name="Schobel S."/>
            <person name="Town C.D."/>
        </authorList>
    </citation>
    <scope>GENOME REANNOTATION</scope>
    <source>
        <strain>cv. Columbia</strain>
    </source>
</reference>
<reference key="3">
    <citation type="journal article" date="2003" name="Science">
        <title>Empirical analysis of transcriptional activity in the Arabidopsis genome.</title>
        <authorList>
            <person name="Yamada K."/>
            <person name="Lim J."/>
            <person name="Dale J.M."/>
            <person name="Chen H."/>
            <person name="Shinn P."/>
            <person name="Palm C.J."/>
            <person name="Southwick A.M."/>
            <person name="Wu H.C."/>
            <person name="Kim C.J."/>
            <person name="Nguyen M."/>
            <person name="Pham P.K."/>
            <person name="Cheuk R.F."/>
            <person name="Karlin-Newmann G."/>
            <person name="Liu S.X."/>
            <person name="Lam B."/>
            <person name="Sakano H."/>
            <person name="Wu T."/>
            <person name="Yu G."/>
            <person name="Miranda M."/>
            <person name="Quach H.L."/>
            <person name="Tripp M."/>
            <person name="Chang C.H."/>
            <person name="Lee J.M."/>
            <person name="Toriumi M.J."/>
            <person name="Chan M.M."/>
            <person name="Tang C.C."/>
            <person name="Onodera C.S."/>
            <person name="Deng J.M."/>
            <person name="Akiyama K."/>
            <person name="Ansari Y."/>
            <person name="Arakawa T."/>
            <person name="Banh J."/>
            <person name="Banno F."/>
            <person name="Bowser L."/>
            <person name="Brooks S.Y."/>
            <person name="Carninci P."/>
            <person name="Chao Q."/>
            <person name="Choy N."/>
            <person name="Enju A."/>
            <person name="Goldsmith A.D."/>
            <person name="Gurjal M."/>
            <person name="Hansen N.F."/>
            <person name="Hayashizaki Y."/>
            <person name="Johnson-Hopson C."/>
            <person name="Hsuan V.W."/>
            <person name="Iida K."/>
            <person name="Karnes M."/>
            <person name="Khan S."/>
            <person name="Koesema E."/>
            <person name="Ishida J."/>
            <person name="Jiang P.X."/>
            <person name="Jones T."/>
            <person name="Kawai J."/>
            <person name="Kamiya A."/>
            <person name="Meyers C."/>
            <person name="Nakajima M."/>
            <person name="Narusaka M."/>
            <person name="Seki M."/>
            <person name="Sakurai T."/>
            <person name="Satou M."/>
            <person name="Tamse R."/>
            <person name="Vaysberg M."/>
            <person name="Wallender E.K."/>
            <person name="Wong C."/>
            <person name="Yamamura Y."/>
            <person name="Yuan S."/>
            <person name="Shinozaki K."/>
            <person name="Davis R.W."/>
            <person name="Theologis A."/>
            <person name="Ecker J.R."/>
        </authorList>
    </citation>
    <scope>NUCLEOTIDE SEQUENCE [LARGE SCALE MRNA] (ISOFORM 1)</scope>
    <source>
        <strain>cv. Columbia</strain>
    </source>
</reference>
<reference key="4">
    <citation type="journal article" date="2012" name="Proc. Natl. Acad. Sci. U.S.A.">
        <title>Multiple organellar RNA editing factor (MORF) family proteins are required for RNA editing in mitochondria and plastids of plants.</title>
        <authorList>
            <person name="Takenaka M."/>
            <person name="Zehrmann A."/>
            <person name="Verbitskiy D."/>
            <person name="Kugelmann M."/>
            <person name="Hartel B."/>
            <person name="Brennicke A."/>
        </authorList>
    </citation>
    <scope>FUNCTION</scope>
    <scope>INTERACTION WITH MORF1</scope>
    <scope>GENE FAMILY</scope>
    <scope>NOMENCLATURE</scope>
    <scope>DISRUPTION PHENOTYPE</scope>
</reference>
<reference key="5">
    <citation type="journal article" date="2013" name="PLoS Genet.">
        <title>Comprehensive high-resolution analysis of the role of an Arabidopsis gene family in RNA editing.</title>
        <authorList>
            <person name="Bentolila S."/>
            <person name="Oh J."/>
            <person name="Hanson M.R."/>
            <person name="Bukowski R."/>
        </authorList>
    </citation>
    <scope>FUNCTION</scope>
    <scope>GENE FAMILY</scope>
    <scope>DISRUPTION PHENOTYPE</scope>
</reference>
<reference key="6">
    <citation type="journal article" date="2015" name="J. Biol. Chem.">
        <title>Selective homo- and heteromer interactions between the multiple organellar RNA editing factor (MORF) proteins in Arabidopsis thaliana.</title>
        <authorList>
            <person name="Zehrmann A."/>
            <person name="Haertel B."/>
            <person name="Glass F."/>
            <person name="Bayer-Csaszar E."/>
            <person name="Obata T."/>
            <person name="Meyer E."/>
            <person name="Brennicke A."/>
            <person name="Takenaka M."/>
        </authorList>
    </citation>
    <scope>HOMODIMERIZATION</scope>
    <scope>INTERACTION WITH MORF8/RIP1; MORF1/RIP8; MORF4/RIP4 AND MORF5/RIP5</scope>
    <scope>SUBCELLULAR LOCATION</scope>
</reference>
<feature type="transit peptide" description="Mitochondrion" evidence="1">
    <location>
        <begin position="1"/>
        <end position="62"/>
    </location>
</feature>
<feature type="chain" id="PRO_0000432526" description="Multiple organellar RNA editing factor 3, mitochondrial">
    <location>
        <begin position="63"/>
        <end position="244"/>
    </location>
</feature>
<feature type="region of interest" description="Disordered" evidence="2">
    <location>
        <begin position="59"/>
        <end position="82"/>
    </location>
</feature>
<feature type="region of interest" description="Disordered" evidence="2">
    <location>
        <begin position="196"/>
        <end position="244"/>
    </location>
</feature>
<feature type="compositionally biased region" description="Polar residues" evidence="2">
    <location>
        <begin position="60"/>
        <end position="80"/>
    </location>
</feature>
<feature type="compositionally biased region" description="Basic and acidic residues" evidence="2">
    <location>
        <begin position="210"/>
        <end position="226"/>
    </location>
</feature>
<feature type="splice variant" id="VSP_057527" description="In isoform 2.">
    <original>CE</original>
    <variation>WQ</variation>
    <location>
        <begin position="127"/>
        <end position="128"/>
    </location>
</feature>